<dbReference type="EC" id="2.5.1.3" evidence="1"/>
<dbReference type="EMBL" id="CP000720">
    <property type="protein sequence ID" value="ABS47924.1"/>
    <property type="molecule type" value="Genomic_DNA"/>
</dbReference>
<dbReference type="SMR" id="A7FNH7"/>
<dbReference type="KEGG" id="ypi:YpsIP31758_3854"/>
<dbReference type="HOGENOM" id="CLU_018272_3_3_6"/>
<dbReference type="UniPathway" id="UPA00060">
    <property type="reaction ID" value="UER00141"/>
</dbReference>
<dbReference type="Proteomes" id="UP000002412">
    <property type="component" value="Chromosome"/>
</dbReference>
<dbReference type="GO" id="GO:0005737">
    <property type="term" value="C:cytoplasm"/>
    <property type="evidence" value="ECO:0007669"/>
    <property type="project" value="TreeGrafter"/>
</dbReference>
<dbReference type="GO" id="GO:0000287">
    <property type="term" value="F:magnesium ion binding"/>
    <property type="evidence" value="ECO:0007669"/>
    <property type="project" value="UniProtKB-UniRule"/>
</dbReference>
<dbReference type="GO" id="GO:0004789">
    <property type="term" value="F:thiamine-phosphate diphosphorylase activity"/>
    <property type="evidence" value="ECO:0007669"/>
    <property type="project" value="UniProtKB-UniRule"/>
</dbReference>
<dbReference type="GO" id="GO:0009228">
    <property type="term" value="P:thiamine biosynthetic process"/>
    <property type="evidence" value="ECO:0007669"/>
    <property type="project" value="UniProtKB-KW"/>
</dbReference>
<dbReference type="GO" id="GO:0009229">
    <property type="term" value="P:thiamine diphosphate biosynthetic process"/>
    <property type="evidence" value="ECO:0007669"/>
    <property type="project" value="UniProtKB-UniRule"/>
</dbReference>
<dbReference type="CDD" id="cd00564">
    <property type="entry name" value="TMP_TenI"/>
    <property type="match status" value="1"/>
</dbReference>
<dbReference type="FunFam" id="3.20.20.70:FF:000064">
    <property type="entry name" value="Thiamine-phosphate synthase"/>
    <property type="match status" value="1"/>
</dbReference>
<dbReference type="Gene3D" id="3.20.20.70">
    <property type="entry name" value="Aldolase class I"/>
    <property type="match status" value="1"/>
</dbReference>
<dbReference type="HAMAP" id="MF_00097">
    <property type="entry name" value="TMP_synthase"/>
    <property type="match status" value="1"/>
</dbReference>
<dbReference type="InterPro" id="IPR013785">
    <property type="entry name" value="Aldolase_TIM"/>
</dbReference>
<dbReference type="InterPro" id="IPR036206">
    <property type="entry name" value="ThiamineP_synth_sf"/>
</dbReference>
<dbReference type="InterPro" id="IPR022998">
    <property type="entry name" value="ThiamineP_synth_TenI"/>
</dbReference>
<dbReference type="InterPro" id="IPR034291">
    <property type="entry name" value="TMP_synthase"/>
</dbReference>
<dbReference type="NCBIfam" id="NF002904">
    <property type="entry name" value="PRK03512.1"/>
    <property type="match status" value="1"/>
</dbReference>
<dbReference type="NCBIfam" id="TIGR00693">
    <property type="entry name" value="thiE"/>
    <property type="match status" value="1"/>
</dbReference>
<dbReference type="PANTHER" id="PTHR20857">
    <property type="entry name" value="THIAMINE-PHOSPHATE PYROPHOSPHORYLASE"/>
    <property type="match status" value="1"/>
</dbReference>
<dbReference type="PANTHER" id="PTHR20857:SF15">
    <property type="entry name" value="THIAMINE-PHOSPHATE SYNTHASE"/>
    <property type="match status" value="1"/>
</dbReference>
<dbReference type="Pfam" id="PF02581">
    <property type="entry name" value="TMP-TENI"/>
    <property type="match status" value="1"/>
</dbReference>
<dbReference type="SUPFAM" id="SSF51391">
    <property type="entry name" value="Thiamin phosphate synthase"/>
    <property type="match status" value="1"/>
</dbReference>
<protein>
    <recommendedName>
        <fullName evidence="1">Thiamine-phosphate synthase</fullName>
        <shortName evidence="1">TP synthase</shortName>
        <shortName evidence="1">TPS</shortName>
        <ecNumber evidence="1">2.5.1.3</ecNumber>
    </recommendedName>
    <alternativeName>
        <fullName evidence="1">Thiamine-phosphate pyrophosphorylase</fullName>
        <shortName evidence="1">TMP pyrophosphorylase</shortName>
        <shortName evidence="1">TMP-PPase</shortName>
    </alternativeName>
</protein>
<feature type="chain" id="PRO_1000057647" description="Thiamine-phosphate synthase">
    <location>
        <begin position="1"/>
        <end position="215"/>
    </location>
</feature>
<feature type="binding site" evidence="1">
    <location>
        <begin position="37"/>
        <end position="41"/>
    </location>
    <ligand>
        <name>4-amino-2-methyl-5-(diphosphooxymethyl)pyrimidine</name>
        <dbReference type="ChEBI" id="CHEBI:57841"/>
    </ligand>
</feature>
<feature type="binding site" evidence="1">
    <location>
        <position position="69"/>
    </location>
    <ligand>
        <name>4-amino-2-methyl-5-(diphosphooxymethyl)pyrimidine</name>
        <dbReference type="ChEBI" id="CHEBI:57841"/>
    </ligand>
</feature>
<feature type="binding site" evidence="1">
    <location>
        <position position="70"/>
    </location>
    <ligand>
        <name>Mg(2+)</name>
        <dbReference type="ChEBI" id="CHEBI:18420"/>
    </ligand>
</feature>
<feature type="binding site" evidence="1">
    <location>
        <position position="89"/>
    </location>
    <ligand>
        <name>Mg(2+)</name>
        <dbReference type="ChEBI" id="CHEBI:18420"/>
    </ligand>
</feature>
<feature type="binding site" evidence="1">
    <location>
        <position position="108"/>
    </location>
    <ligand>
        <name>4-amino-2-methyl-5-(diphosphooxymethyl)pyrimidine</name>
        <dbReference type="ChEBI" id="CHEBI:57841"/>
    </ligand>
</feature>
<feature type="binding site" evidence="1">
    <location>
        <begin position="134"/>
        <end position="136"/>
    </location>
    <ligand>
        <name>2-[(2R,5Z)-2-carboxy-4-methylthiazol-5(2H)-ylidene]ethyl phosphate</name>
        <dbReference type="ChEBI" id="CHEBI:62899"/>
    </ligand>
</feature>
<feature type="binding site" evidence="1">
    <location>
        <position position="137"/>
    </location>
    <ligand>
        <name>4-amino-2-methyl-5-(diphosphooxymethyl)pyrimidine</name>
        <dbReference type="ChEBI" id="CHEBI:57841"/>
    </ligand>
</feature>
<feature type="binding site" evidence="1">
    <location>
        <position position="166"/>
    </location>
    <ligand>
        <name>2-[(2R,5Z)-2-carboxy-4-methylthiazol-5(2H)-ylidene]ethyl phosphate</name>
        <dbReference type="ChEBI" id="CHEBI:62899"/>
    </ligand>
</feature>
<feature type="binding site" evidence="1">
    <location>
        <begin position="186"/>
        <end position="187"/>
    </location>
    <ligand>
        <name>2-[(2R,5Z)-2-carboxy-4-methylthiazol-5(2H)-ylidene]ethyl phosphate</name>
        <dbReference type="ChEBI" id="CHEBI:62899"/>
    </ligand>
</feature>
<keyword id="KW-0460">Magnesium</keyword>
<keyword id="KW-0479">Metal-binding</keyword>
<keyword id="KW-0784">Thiamine biosynthesis</keyword>
<keyword id="KW-0808">Transferase</keyword>
<gene>
    <name evidence="1" type="primary">thiE</name>
    <name type="ordered locus">YpsIP31758_3854</name>
</gene>
<organism>
    <name type="scientific">Yersinia pseudotuberculosis serotype O:1b (strain IP 31758)</name>
    <dbReference type="NCBI Taxonomy" id="349747"/>
    <lineage>
        <taxon>Bacteria</taxon>
        <taxon>Pseudomonadati</taxon>
        <taxon>Pseudomonadota</taxon>
        <taxon>Gammaproteobacteria</taxon>
        <taxon>Enterobacterales</taxon>
        <taxon>Yersiniaceae</taxon>
        <taxon>Yersinia</taxon>
    </lineage>
</organism>
<accession>A7FNH7</accession>
<reference key="1">
    <citation type="journal article" date="2007" name="PLoS Genet.">
        <title>The complete genome sequence of Yersinia pseudotuberculosis IP31758, the causative agent of Far East scarlet-like fever.</title>
        <authorList>
            <person name="Eppinger M."/>
            <person name="Rosovitz M.J."/>
            <person name="Fricke W.F."/>
            <person name="Rasko D.A."/>
            <person name="Kokorina G."/>
            <person name="Fayolle C."/>
            <person name="Lindler L.E."/>
            <person name="Carniel E."/>
            <person name="Ravel J."/>
        </authorList>
    </citation>
    <scope>NUCLEOTIDE SEQUENCE [LARGE SCALE GENOMIC DNA]</scope>
    <source>
        <strain>IP 31758</strain>
    </source>
</reference>
<sequence length="215" mass="23305">MATPGFPSTEQRLGLYPVVDSLLWIERLLAAGVTTLQLRIKNADDAQVEQDIVAAIELGKRYQARLFINDYWQLAVKHGAYGVHLGQEDLETADLAAIQQAGLRLGISTHDEHELAVAKTLRPSYIALGHIFPTQTKQMPSSPQGLASLSRQVKNTPDYPTVAIGGISIERVPHVLATGVGSVAVVSAITLASDWQRATAQLLHLIEGKELADEK</sequence>
<evidence type="ECO:0000255" key="1">
    <source>
        <dbReference type="HAMAP-Rule" id="MF_00097"/>
    </source>
</evidence>
<comment type="function">
    <text evidence="1">Condenses 4-methyl-5-(beta-hydroxyethyl)thiazole monophosphate (THZ-P) and 2-methyl-4-amino-5-hydroxymethyl pyrimidine pyrophosphate (HMP-PP) to form thiamine monophosphate (TMP).</text>
</comment>
<comment type="catalytic activity">
    <reaction evidence="1">
        <text>2-[(2R,5Z)-2-carboxy-4-methylthiazol-5(2H)-ylidene]ethyl phosphate + 4-amino-2-methyl-5-(diphosphooxymethyl)pyrimidine + 2 H(+) = thiamine phosphate + CO2 + diphosphate</text>
        <dbReference type="Rhea" id="RHEA:47844"/>
        <dbReference type="ChEBI" id="CHEBI:15378"/>
        <dbReference type="ChEBI" id="CHEBI:16526"/>
        <dbReference type="ChEBI" id="CHEBI:33019"/>
        <dbReference type="ChEBI" id="CHEBI:37575"/>
        <dbReference type="ChEBI" id="CHEBI:57841"/>
        <dbReference type="ChEBI" id="CHEBI:62899"/>
        <dbReference type="EC" id="2.5.1.3"/>
    </reaction>
</comment>
<comment type="catalytic activity">
    <reaction evidence="1">
        <text>2-(2-carboxy-4-methylthiazol-5-yl)ethyl phosphate + 4-amino-2-methyl-5-(diphosphooxymethyl)pyrimidine + 2 H(+) = thiamine phosphate + CO2 + diphosphate</text>
        <dbReference type="Rhea" id="RHEA:47848"/>
        <dbReference type="ChEBI" id="CHEBI:15378"/>
        <dbReference type="ChEBI" id="CHEBI:16526"/>
        <dbReference type="ChEBI" id="CHEBI:33019"/>
        <dbReference type="ChEBI" id="CHEBI:37575"/>
        <dbReference type="ChEBI" id="CHEBI:57841"/>
        <dbReference type="ChEBI" id="CHEBI:62890"/>
        <dbReference type="EC" id="2.5.1.3"/>
    </reaction>
</comment>
<comment type="catalytic activity">
    <reaction evidence="1">
        <text>4-methyl-5-(2-phosphooxyethyl)-thiazole + 4-amino-2-methyl-5-(diphosphooxymethyl)pyrimidine + H(+) = thiamine phosphate + diphosphate</text>
        <dbReference type="Rhea" id="RHEA:22328"/>
        <dbReference type="ChEBI" id="CHEBI:15378"/>
        <dbReference type="ChEBI" id="CHEBI:33019"/>
        <dbReference type="ChEBI" id="CHEBI:37575"/>
        <dbReference type="ChEBI" id="CHEBI:57841"/>
        <dbReference type="ChEBI" id="CHEBI:58296"/>
        <dbReference type="EC" id="2.5.1.3"/>
    </reaction>
</comment>
<comment type="cofactor">
    <cofactor evidence="1">
        <name>Mg(2+)</name>
        <dbReference type="ChEBI" id="CHEBI:18420"/>
    </cofactor>
    <text evidence="1">Binds 1 Mg(2+) ion per subunit.</text>
</comment>
<comment type="pathway">
    <text evidence="1">Cofactor biosynthesis; thiamine diphosphate biosynthesis; thiamine phosphate from 4-amino-2-methyl-5-diphosphomethylpyrimidine and 4-methyl-5-(2-phosphoethyl)-thiazole: step 1/1.</text>
</comment>
<comment type="similarity">
    <text evidence="1">Belongs to the thiamine-phosphate synthase family.</text>
</comment>
<proteinExistence type="inferred from homology"/>
<name>THIE_YERP3</name>